<reference key="1">
    <citation type="submission" date="2003-10" db="EMBL/GenBank/DDBJ databases">
        <title>The complete genome sequence of the alkaliphilic Bacillus clausii KSM-K16.</title>
        <authorList>
            <person name="Takaki Y."/>
            <person name="Kageyama Y."/>
            <person name="Shimamura S."/>
            <person name="Suzuki H."/>
            <person name="Nishi S."/>
            <person name="Hatada Y."/>
            <person name="Kawai S."/>
            <person name="Ito S."/>
            <person name="Horikoshi K."/>
        </authorList>
    </citation>
    <scope>NUCLEOTIDE SEQUENCE [LARGE SCALE GENOMIC DNA]</scope>
    <source>
        <strain>KSM-K16</strain>
    </source>
</reference>
<comment type="function">
    <text evidence="1">Plays an essential role in the initiation and regulation of chromosomal replication. ATP-DnaA binds to the origin of replication (oriC) to initiate formation of the DNA replication initiation complex once per cell cycle. Binds the DnaA box (a 9 base pair repeat at the origin) and separates the double-stranded (ds)DNA. Forms a right-handed helical filament on oriC DNA; dsDNA binds to the exterior of the filament while single-stranded (ss)DNA is stabiized in the filament's interior. The ATP-DnaA-oriC complex binds and stabilizes one strand of the AT-rich DNA unwinding element (DUE), permitting loading of DNA polymerase. After initiation quickly degrades to an ADP-DnaA complex that is not apt for DNA replication. Binds acidic phospholipids.</text>
</comment>
<comment type="subunit">
    <text evidence="1">Oligomerizes as a right-handed, spiral filament on DNA at oriC.</text>
</comment>
<comment type="subcellular location">
    <subcellularLocation>
        <location evidence="1">Cytoplasm</location>
    </subcellularLocation>
</comment>
<comment type="domain">
    <text evidence="1">Domain I is involved in oligomerization and binding regulators, domain II is flexibile and of varying length in different bacteria, domain III forms the AAA+ region, while domain IV binds dsDNA.</text>
</comment>
<comment type="similarity">
    <text evidence="1">Belongs to the DnaA family.</text>
</comment>
<accession>Q5WM31</accession>
<evidence type="ECO:0000255" key="1">
    <source>
        <dbReference type="HAMAP-Rule" id="MF_00377"/>
    </source>
</evidence>
<evidence type="ECO:0000256" key="2">
    <source>
        <dbReference type="SAM" id="MobiDB-lite"/>
    </source>
</evidence>
<protein>
    <recommendedName>
        <fullName evidence="1">Chromosomal replication initiator protein DnaA</fullName>
    </recommendedName>
</protein>
<proteinExistence type="inferred from homology"/>
<gene>
    <name evidence="1" type="primary">dnaA</name>
    <name type="ordered locus">ABC0001</name>
</gene>
<name>DNAA_SHOC1</name>
<keyword id="KW-0067">ATP-binding</keyword>
<keyword id="KW-0963">Cytoplasm</keyword>
<keyword id="KW-0235">DNA replication</keyword>
<keyword id="KW-0238">DNA-binding</keyword>
<keyword id="KW-0446">Lipid-binding</keyword>
<keyword id="KW-0547">Nucleotide-binding</keyword>
<keyword id="KW-1185">Reference proteome</keyword>
<feature type="chain" id="PRO_0000114132" description="Chromosomal replication initiator protein DnaA">
    <location>
        <begin position="1"/>
        <end position="451"/>
    </location>
</feature>
<feature type="region of interest" description="Domain I, interacts with DnaA modulators" evidence="1">
    <location>
        <begin position="1"/>
        <end position="93"/>
    </location>
</feature>
<feature type="region of interest" description="Disordered" evidence="2">
    <location>
        <begin position="88"/>
        <end position="108"/>
    </location>
</feature>
<feature type="region of interest" description="Domain II" evidence="1">
    <location>
        <begin position="94"/>
        <end position="113"/>
    </location>
</feature>
<feature type="region of interest" description="Domain III, AAA+ region" evidence="1">
    <location>
        <begin position="114"/>
        <end position="330"/>
    </location>
</feature>
<feature type="region of interest" description="Domain IV, binds dsDNA" evidence="1">
    <location>
        <begin position="331"/>
        <end position="451"/>
    </location>
</feature>
<feature type="binding site" evidence="1">
    <location>
        <position position="158"/>
    </location>
    <ligand>
        <name>ATP</name>
        <dbReference type="ChEBI" id="CHEBI:30616"/>
    </ligand>
</feature>
<feature type="binding site" evidence="1">
    <location>
        <position position="160"/>
    </location>
    <ligand>
        <name>ATP</name>
        <dbReference type="ChEBI" id="CHEBI:30616"/>
    </ligand>
</feature>
<feature type="binding site" evidence="1">
    <location>
        <position position="161"/>
    </location>
    <ligand>
        <name>ATP</name>
        <dbReference type="ChEBI" id="CHEBI:30616"/>
    </ligand>
</feature>
<feature type="binding site" evidence="1">
    <location>
        <position position="162"/>
    </location>
    <ligand>
        <name>ATP</name>
        <dbReference type="ChEBI" id="CHEBI:30616"/>
    </ligand>
</feature>
<sequence>MENIDDLWNKVLEEMKKKVSKPSYETWLRATKANALQNNDTIIVTAPNEFARDWLEDHYSGLTSDIIEQLTGARLTPKFVIPQHNQEEEALPEQTPQTPPEKDVAGQSTLSQTMLNDKYTFNTFVIGSGNRFAHAASLAVAEAPARAYNPLFIYGGVGLGKTHLMHAIGHYVMEHNPNAKVVYLSSEKFTNEFINAIRDNKAVHFRNKYRNVDVLLIDDIQFIAGKIQTQEEFFHTFNALHEESKQIVISSDRPPKEIPTLEDRLRSRFEWGLITDITPPDLETRIAILRKKAKAENLDIPNEVMLYIANQIDTNIRELEGALIRVVAYSSLINQDMNADLAAEALKDIIPNAMPKTLTITDIQKLVGEHFQVKLEDFKAKKRTKSVAFPRQIAMYLSREMTDASLPKIGSEFGGRDHTTVIHAHEKISKLLATDQELQQKVQAITEQLRQ</sequence>
<organism>
    <name type="scientific">Shouchella clausii (strain KSM-K16)</name>
    <name type="common">Alkalihalobacillus clausii</name>
    <dbReference type="NCBI Taxonomy" id="66692"/>
    <lineage>
        <taxon>Bacteria</taxon>
        <taxon>Bacillati</taxon>
        <taxon>Bacillota</taxon>
        <taxon>Bacilli</taxon>
        <taxon>Bacillales</taxon>
        <taxon>Bacillaceae</taxon>
        <taxon>Shouchella</taxon>
    </lineage>
</organism>
<dbReference type="EMBL" id="AP006627">
    <property type="protein sequence ID" value="BAD62544.1"/>
    <property type="molecule type" value="Genomic_DNA"/>
</dbReference>
<dbReference type="RefSeq" id="WP_011244865.1">
    <property type="nucleotide sequence ID" value="NC_006582.1"/>
</dbReference>
<dbReference type="SMR" id="Q5WM31"/>
<dbReference type="STRING" id="66692.ABC0001"/>
<dbReference type="GeneID" id="86928461"/>
<dbReference type="KEGG" id="bcl:ABC0001"/>
<dbReference type="eggNOG" id="COG0593">
    <property type="taxonomic scope" value="Bacteria"/>
</dbReference>
<dbReference type="HOGENOM" id="CLU_026910_3_1_9"/>
<dbReference type="OrthoDB" id="9807019at2"/>
<dbReference type="Proteomes" id="UP000001168">
    <property type="component" value="Chromosome"/>
</dbReference>
<dbReference type="GO" id="GO:0005737">
    <property type="term" value="C:cytoplasm"/>
    <property type="evidence" value="ECO:0007669"/>
    <property type="project" value="UniProtKB-SubCell"/>
</dbReference>
<dbReference type="GO" id="GO:0005886">
    <property type="term" value="C:plasma membrane"/>
    <property type="evidence" value="ECO:0007669"/>
    <property type="project" value="TreeGrafter"/>
</dbReference>
<dbReference type="GO" id="GO:0005524">
    <property type="term" value="F:ATP binding"/>
    <property type="evidence" value="ECO:0007669"/>
    <property type="project" value="UniProtKB-UniRule"/>
</dbReference>
<dbReference type="GO" id="GO:0016887">
    <property type="term" value="F:ATP hydrolysis activity"/>
    <property type="evidence" value="ECO:0007669"/>
    <property type="project" value="InterPro"/>
</dbReference>
<dbReference type="GO" id="GO:0003688">
    <property type="term" value="F:DNA replication origin binding"/>
    <property type="evidence" value="ECO:0007669"/>
    <property type="project" value="UniProtKB-UniRule"/>
</dbReference>
<dbReference type="GO" id="GO:0008289">
    <property type="term" value="F:lipid binding"/>
    <property type="evidence" value="ECO:0007669"/>
    <property type="project" value="UniProtKB-KW"/>
</dbReference>
<dbReference type="GO" id="GO:0006270">
    <property type="term" value="P:DNA replication initiation"/>
    <property type="evidence" value="ECO:0007669"/>
    <property type="project" value="UniProtKB-UniRule"/>
</dbReference>
<dbReference type="GO" id="GO:0006275">
    <property type="term" value="P:regulation of DNA replication"/>
    <property type="evidence" value="ECO:0007669"/>
    <property type="project" value="UniProtKB-UniRule"/>
</dbReference>
<dbReference type="CDD" id="cd00009">
    <property type="entry name" value="AAA"/>
    <property type="match status" value="1"/>
</dbReference>
<dbReference type="CDD" id="cd06571">
    <property type="entry name" value="Bac_DnaA_C"/>
    <property type="match status" value="1"/>
</dbReference>
<dbReference type="FunFam" id="1.10.1750.10:FF:000003">
    <property type="entry name" value="Chromosomal replication initiator protein DnaA"/>
    <property type="match status" value="1"/>
</dbReference>
<dbReference type="FunFam" id="1.10.8.60:FF:000003">
    <property type="entry name" value="Chromosomal replication initiator protein DnaA"/>
    <property type="match status" value="1"/>
</dbReference>
<dbReference type="FunFam" id="3.40.50.300:FF:000150">
    <property type="entry name" value="Chromosomal replication initiator protein DnaA"/>
    <property type="match status" value="1"/>
</dbReference>
<dbReference type="Gene3D" id="1.10.1750.10">
    <property type="match status" value="1"/>
</dbReference>
<dbReference type="Gene3D" id="1.10.8.60">
    <property type="match status" value="1"/>
</dbReference>
<dbReference type="Gene3D" id="3.30.300.180">
    <property type="match status" value="1"/>
</dbReference>
<dbReference type="Gene3D" id="3.40.50.300">
    <property type="entry name" value="P-loop containing nucleotide triphosphate hydrolases"/>
    <property type="match status" value="1"/>
</dbReference>
<dbReference type="HAMAP" id="MF_00377">
    <property type="entry name" value="DnaA_bact"/>
    <property type="match status" value="1"/>
</dbReference>
<dbReference type="InterPro" id="IPR003593">
    <property type="entry name" value="AAA+_ATPase"/>
</dbReference>
<dbReference type="InterPro" id="IPR001957">
    <property type="entry name" value="Chromosome_initiator_DnaA"/>
</dbReference>
<dbReference type="InterPro" id="IPR020591">
    <property type="entry name" value="Chromosome_initiator_DnaA-like"/>
</dbReference>
<dbReference type="InterPro" id="IPR018312">
    <property type="entry name" value="Chromosome_initiator_DnaA_CS"/>
</dbReference>
<dbReference type="InterPro" id="IPR013159">
    <property type="entry name" value="DnaA_C"/>
</dbReference>
<dbReference type="InterPro" id="IPR013317">
    <property type="entry name" value="DnaA_dom"/>
</dbReference>
<dbReference type="InterPro" id="IPR024633">
    <property type="entry name" value="DnaA_N_dom"/>
</dbReference>
<dbReference type="InterPro" id="IPR038454">
    <property type="entry name" value="DnaA_N_sf"/>
</dbReference>
<dbReference type="InterPro" id="IPR027417">
    <property type="entry name" value="P-loop_NTPase"/>
</dbReference>
<dbReference type="InterPro" id="IPR010921">
    <property type="entry name" value="Trp_repressor/repl_initiator"/>
</dbReference>
<dbReference type="NCBIfam" id="TIGR00362">
    <property type="entry name" value="DnaA"/>
    <property type="match status" value="1"/>
</dbReference>
<dbReference type="NCBIfam" id="NF010686">
    <property type="entry name" value="PRK14086.1"/>
    <property type="match status" value="1"/>
</dbReference>
<dbReference type="PANTHER" id="PTHR30050">
    <property type="entry name" value="CHROMOSOMAL REPLICATION INITIATOR PROTEIN DNAA"/>
    <property type="match status" value="1"/>
</dbReference>
<dbReference type="PANTHER" id="PTHR30050:SF2">
    <property type="entry name" value="CHROMOSOMAL REPLICATION INITIATOR PROTEIN DNAA"/>
    <property type="match status" value="1"/>
</dbReference>
<dbReference type="Pfam" id="PF00308">
    <property type="entry name" value="Bac_DnaA"/>
    <property type="match status" value="1"/>
</dbReference>
<dbReference type="Pfam" id="PF08299">
    <property type="entry name" value="Bac_DnaA_C"/>
    <property type="match status" value="1"/>
</dbReference>
<dbReference type="Pfam" id="PF11638">
    <property type="entry name" value="DnaA_N"/>
    <property type="match status" value="1"/>
</dbReference>
<dbReference type="PRINTS" id="PR00051">
    <property type="entry name" value="DNAA"/>
</dbReference>
<dbReference type="SMART" id="SM00382">
    <property type="entry name" value="AAA"/>
    <property type="match status" value="1"/>
</dbReference>
<dbReference type="SMART" id="SM00760">
    <property type="entry name" value="Bac_DnaA_C"/>
    <property type="match status" value="1"/>
</dbReference>
<dbReference type="SUPFAM" id="SSF52540">
    <property type="entry name" value="P-loop containing nucleoside triphosphate hydrolases"/>
    <property type="match status" value="1"/>
</dbReference>
<dbReference type="SUPFAM" id="SSF48295">
    <property type="entry name" value="TrpR-like"/>
    <property type="match status" value="1"/>
</dbReference>
<dbReference type="PROSITE" id="PS01008">
    <property type="entry name" value="DNAA"/>
    <property type="match status" value="1"/>
</dbReference>